<feature type="chain" id="PRO_0000213374" description="Adenosine 3'-phospho 5'-phosphosulfate transporter 1">
    <location>
        <begin position="1"/>
        <end position="432"/>
    </location>
</feature>
<feature type="transmembrane region" description="Helical" evidence="1">
    <location>
        <begin position="5"/>
        <end position="25"/>
    </location>
</feature>
<feature type="transmembrane region" description="Helical" evidence="1">
    <location>
        <begin position="40"/>
        <end position="60"/>
    </location>
</feature>
<feature type="transmembrane region" description="Helical" evidence="1">
    <location>
        <begin position="109"/>
        <end position="129"/>
    </location>
</feature>
<feature type="transmembrane region" description="Helical" evidence="1">
    <location>
        <begin position="154"/>
        <end position="174"/>
    </location>
</feature>
<feature type="transmembrane region" description="Helical" evidence="1">
    <location>
        <begin position="238"/>
        <end position="258"/>
    </location>
</feature>
<feature type="transmembrane region" description="Helical" evidence="1">
    <location>
        <begin position="265"/>
        <end position="285"/>
    </location>
</feature>
<feature type="transmembrane region" description="Helical" evidence="1">
    <location>
        <begin position="299"/>
        <end position="319"/>
    </location>
</feature>
<feature type="transmembrane region" description="Helical" evidence="1">
    <location>
        <begin position="353"/>
        <end position="373"/>
    </location>
</feature>
<feature type="transmembrane region" description="Helical" evidence="1">
    <location>
        <begin position="387"/>
        <end position="407"/>
    </location>
</feature>
<feature type="modified residue" description="Phosphoserine" evidence="13 14 15">
    <location>
        <position position="427"/>
    </location>
</feature>
<feature type="splice variant" id="VSP_057436" description="In isoform 5." evidence="7">
    <location>
        <begin position="1"/>
        <end position="133"/>
    </location>
</feature>
<feature type="splice variant" id="VSP_026949" description="In isoform 3." evidence="8">
    <location>
        <begin position="1"/>
        <end position="49"/>
    </location>
</feature>
<feature type="splice variant" id="VSP_054696" description="In isoform 4." evidence="7">
    <original>MDARWWAVVVLAAFPSLGAGGETPEAP</original>
    <variation>MLLAMPALWYLATSWCSTSGGRTTWRP</variation>
    <location>
        <begin position="1"/>
        <end position="27"/>
    </location>
</feature>
<feature type="splice variant" id="VSP_054697" description="In isoform 4." evidence="7">
    <location>
        <begin position="28"/>
        <end position="120"/>
    </location>
</feature>
<feature type="splice variant" id="VSP_014084" description="In isoform 2." evidence="6">
    <location>
        <begin position="272"/>
        <end position="311"/>
    </location>
</feature>
<feature type="sequence variant" id="VAR_022657" description="In dbSNP:rs3734707." evidence="3">
    <original>L</original>
    <variation>V</variation>
    <location>
        <position position="342"/>
    </location>
</feature>
<feature type="sequence variant" id="VAR_088180" description="In HLD26; uncertain significance; decreased expression in homozygous patient's skin fibroblasts compared to control cells; partial mislocalization of the protein, with diffuse signal in the cell and only partial localization to the Golgi apparatus; decreased chondroitin sulfate disaccharide sulfation in homozygous patient's skin fibroblasts compared to control cells, suggesting impaired function; dbSNP:rs760851221." evidence="4">
    <location>
        <position position="407"/>
    </location>
</feature>
<feature type="sequence conflict" description="In Ref. 8; BAD96748." evidence="9" ref="8">
    <original>L</original>
    <variation>P</variation>
    <location>
        <position position="214"/>
    </location>
</feature>
<feature type="sequence conflict" description="In Ref. 5; BAC11631." evidence="9" ref="5">
    <original>E</original>
    <variation>G</variation>
    <location>
        <position position="336"/>
    </location>
</feature>
<gene>
    <name evidence="12" type="primary">SLC35B2</name>
    <name evidence="5" type="synonym">PAPST1</name>
    <name evidence="11" type="ORF">PSEC0149</name>
</gene>
<accession>Q8TB61</accession>
<accession>B4DDM2</accession>
<accession>B4DDU9</accession>
<accession>F5H7Y9</accession>
<accession>Q2VY06</accession>
<accession>Q53GA3</accession>
<accession>Q5T9W1</accession>
<accession>Q5T9W2</accession>
<accession>Q7Z2G3</accession>
<accession>Q8NBK6</accession>
<accession>Q96AR6</accession>
<organism>
    <name type="scientific">Homo sapiens</name>
    <name type="common">Human</name>
    <dbReference type="NCBI Taxonomy" id="9606"/>
    <lineage>
        <taxon>Eukaryota</taxon>
        <taxon>Metazoa</taxon>
        <taxon>Chordata</taxon>
        <taxon>Craniata</taxon>
        <taxon>Vertebrata</taxon>
        <taxon>Euteleostomi</taxon>
        <taxon>Mammalia</taxon>
        <taxon>Eutheria</taxon>
        <taxon>Euarchontoglires</taxon>
        <taxon>Primates</taxon>
        <taxon>Haplorrhini</taxon>
        <taxon>Catarrhini</taxon>
        <taxon>Hominidae</taxon>
        <taxon>Homo</taxon>
    </lineage>
</organism>
<dbReference type="EMBL" id="AB106538">
    <property type="protein sequence ID" value="BAC79117.1"/>
    <property type="molecule type" value="mRNA"/>
</dbReference>
<dbReference type="EMBL" id="AY491520">
    <property type="protein sequence ID" value="AAS79661.1"/>
    <property type="molecule type" value="mRNA"/>
</dbReference>
<dbReference type="EMBL" id="AB097021">
    <property type="protein sequence ID" value="BAC77374.1"/>
    <property type="molecule type" value="mRNA"/>
</dbReference>
<dbReference type="EMBL" id="AB097039">
    <property type="protein sequence ID" value="BAC77392.1"/>
    <property type="molecule type" value="mRNA"/>
</dbReference>
<dbReference type="EMBL" id="AK293251">
    <property type="protein sequence ID" value="BAG56783.1"/>
    <property type="molecule type" value="mRNA"/>
</dbReference>
<dbReference type="EMBL" id="AK293344">
    <property type="protein sequence ID" value="BAG56860.1"/>
    <property type="molecule type" value="mRNA"/>
</dbReference>
<dbReference type="EMBL" id="AK075456">
    <property type="protein sequence ID" value="BAC11631.1"/>
    <property type="molecule type" value="mRNA"/>
</dbReference>
<dbReference type="EMBL" id="AL139392">
    <property type="status" value="NOT_ANNOTATED_CDS"/>
    <property type="molecule type" value="Genomic_DNA"/>
</dbReference>
<dbReference type="EMBL" id="BC016839">
    <property type="protein sequence ID" value="AAH16839.1"/>
    <property type="molecule type" value="mRNA"/>
</dbReference>
<dbReference type="EMBL" id="BC024288">
    <property type="protein sequence ID" value="AAH24288.1"/>
    <property type="molecule type" value="mRNA"/>
</dbReference>
<dbReference type="EMBL" id="AK223028">
    <property type="protein sequence ID" value="BAD96748.1"/>
    <property type="molecule type" value="mRNA"/>
</dbReference>
<dbReference type="CCDS" id="CCDS34462.1">
    <molecule id="Q8TB61-1"/>
</dbReference>
<dbReference type="CCDS" id="CCDS69127.1">
    <molecule id="Q8TB61-4"/>
</dbReference>
<dbReference type="CCDS" id="CCDS75462.1">
    <molecule id="Q8TB61-5"/>
</dbReference>
<dbReference type="CCDS" id="CCDS75463.1">
    <molecule id="Q8TB61-3"/>
</dbReference>
<dbReference type="RefSeq" id="NP_001273438.1">
    <property type="nucleotide sequence ID" value="NM_001286509.1"/>
</dbReference>
<dbReference type="RefSeq" id="NP_001273439.1">
    <property type="nucleotide sequence ID" value="NM_001286510.1"/>
</dbReference>
<dbReference type="RefSeq" id="NP_001273440.1">
    <molecule id="Q8TB61-3"/>
    <property type="nucleotide sequence ID" value="NM_001286511.2"/>
</dbReference>
<dbReference type="RefSeq" id="NP_001273441.1">
    <molecule id="Q8TB61-3"/>
    <property type="nucleotide sequence ID" value="NM_001286512.2"/>
</dbReference>
<dbReference type="RefSeq" id="NP_001273442.1">
    <molecule id="Q8TB61-4"/>
    <property type="nucleotide sequence ID" value="NM_001286513.2"/>
</dbReference>
<dbReference type="RefSeq" id="NP_001273446.1">
    <property type="nucleotide sequence ID" value="NM_001286517.1"/>
</dbReference>
<dbReference type="RefSeq" id="NP_001273448.1">
    <molecule id="Q8TB61-5"/>
    <property type="nucleotide sequence ID" value="NM_001286519.2"/>
</dbReference>
<dbReference type="RefSeq" id="NP_001273449.1">
    <molecule id="Q8TB61-5"/>
    <property type="nucleotide sequence ID" value="NM_001286520.2"/>
</dbReference>
<dbReference type="RefSeq" id="NP_835361.1">
    <molecule id="Q8TB61-1"/>
    <property type="nucleotide sequence ID" value="NM_178148.4"/>
</dbReference>
<dbReference type="BioGRID" id="131484">
    <property type="interactions" value="111"/>
</dbReference>
<dbReference type="FunCoup" id="Q8TB61">
    <property type="interactions" value="1535"/>
</dbReference>
<dbReference type="IntAct" id="Q8TB61">
    <property type="interactions" value="72"/>
</dbReference>
<dbReference type="MINT" id="Q8TB61"/>
<dbReference type="STRING" id="9606.ENSP00000377401"/>
<dbReference type="BindingDB" id="Q8TB61"/>
<dbReference type="TCDB" id="2.A.7.11.3">
    <property type="family name" value="the drug/metabolite transporter (dmt) superfamily"/>
</dbReference>
<dbReference type="GlyGen" id="Q8TB61">
    <property type="glycosylation" value="1 site, 1 O-linked glycan (1 site)"/>
</dbReference>
<dbReference type="iPTMnet" id="Q8TB61"/>
<dbReference type="PhosphoSitePlus" id="Q8TB61"/>
<dbReference type="SwissPalm" id="Q8TB61"/>
<dbReference type="BioMuta" id="SLC35B2"/>
<dbReference type="DMDM" id="67461576"/>
<dbReference type="jPOST" id="Q8TB61"/>
<dbReference type="MassIVE" id="Q8TB61"/>
<dbReference type="PaxDb" id="9606-ENSP00000377401"/>
<dbReference type="PeptideAtlas" id="Q8TB61"/>
<dbReference type="ProteomicsDB" id="27631"/>
<dbReference type="ProteomicsDB" id="3871"/>
<dbReference type="ProteomicsDB" id="73963">
    <molecule id="Q8TB61-1"/>
</dbReference>
<dbReference type="ProteomicsDB" id="73964">
    <molecule id="Q8TB61-2"/>
</dbReference>
<dbReference type="ProteomicsDB" id="73965">
    <molecule id="Q8TB61-3"/>
</dbReference>
<dbReference type="Pumba" id="Q8TB61"/>
<dbReference type="Antibodypedia" id="30649">
    <property type="antibodies" value="99 antibodies from 23 providers"/>
</dbReference>
<dbReference type="DNASU" id="347734"/>
<dbReference type="Ensembl" id="ENST00000393812.4">
    <molecule id="Q8TB61-1"/>
    <property type="protein sequence ID" value="ENSP00000377401.3"/>
    <property type="gene ID" value="ENSG00000157593.20"/>
</dbReference>
<dbReference type="Ensembl" id="ENST00000537814.2">
    <molecule id="Q8TB61-5"/>
    <property type="protein sequence ID" value="ENSP00000440340.1"/>
    <property type="gene ID" value="ENSG00000157593.20"/>
</dbReference>
<dbReference type="Ensembl" id="ENST00000538577.5">
    <molecule id="Q8TB61-4"/>
    <property type="protein sequence ID" value="ENSP00000443845.1"/>
    <property type="gene ID" value="ENSG00000157593.20"/>
</dbReference>
<dbReference type="Ensembl" id="ENST00000615337.4">
    <molecule id="Q8TB61-3"/>
    <property type="protein sequence ID" value="ENSP00000480681.1"/>
    <property type="gene ID" value="ENSG00000157593.20"/>
</dbReference>
<dbReference type="GeneID" id="347734"/>
<dbReference type="KEGG" id="hsa:347734"/>
<dbReference type="MANE-Select" id="ENST00000393812.4">
    <property type="protein sequence ID" value="ENSP00000377401.3"/>
    <property type="RefSeq nucleotide sequence ID" value="NM_178148.4"/>
    <property type="RefSeq protein sequence ID" value="NP_835361.1"/>
</dbReference>
<dbReference type="UCSC" id="uc003oxd.5">
    <molecule id="Q8TB61-1"/>
    <property type="organism name" value="human"/>
</dbReference>
<dbReference type="UCSC" id="uc011dvu.4">
    <property type="organism name" value="human"/>
</dbReference>
<dbReference type="AGR" id="HGNC:16872"/>
<dbReference type="CTD" id="347734"/>
<dbReference type="DisGeNET" id="347734"/>
<dbReference type="GeneCards" id="SLC35B2"/>
<dbReference type="HGNC" id="HGNC:16872">
    <property type="gene designation" value="SLC35B2"/>
</dbReference>
<dbReference type="HPA" id="ENSG00000157593">
    <property type="expression patterns" value="Low tissue specificity"/>
</dbReference>
<dbReference type="MalaCards" id="SLC35B2"/>
<dbReference type="MIM" id="610788">
    <property type="type" value="gene"/>
</dbReference>
<dbReference type="MIM" id="620269">
    <property type="type" value="phenotype"/>
</dbReference>
<dbReference type="neXtProt" id="NX_Q8TB61"/>
<dbReference type="OpenTargets" id="ENSG00000157593"/>
<dbReference type="PharmGKB" id="PA134927864"/>
<dbReference type="VEuPathDB" id="HostDB:ENSG00000157593"/>
<dbReference type="eggNOG" id="KOG1581">
    <property type="taxonomic scope" value="Eukaryota"/>
</dbReference>
<dbReference type="GeneTree" id="ENSGT00940000157927"/>
<dbReference type="HOGENOM" id="CLU_036019_3_1_1"/>
<dbReference type="InParanoid" id="Q8TB61"/>
<dbReference type="OMA" id="KIMTQHY"/>
<dbReference type="OrthoDB" id="10035043at2759"/>
<dbReference type="PAN-GO" id="Q8TB61">
    <property type="GO annotations" value="3 GO annotations based on evolutionary models"/>
</dbReference>
<dbReference type="PhylomeDB" id="Q8TB61"/>
<dbReference type="TreeFam" id="TF105926"/>
<dbReference type="PathwayCommons" id="Q8TB61"/>
<dbReference type="Reactome" id="R-HSA-174362">
    <property type="pathway name" value="Transport and synthesis of PAPS"/>
</dbReference>
<dbReference type="Reactome" id="R-HSA-727802">
    <property type="pathway name" value="Transport of nucleotide sugars"/>
</dbReference>
<dbReference type="SABIO-RK" id="Q8TB61"/>
<dbReference type="SignaLink" id="Q8TB61"/>
<dbReference type="BioGRID-ORCS" id="347734">
    <property type="hits" value="127 hits in 1183 CRISPR screens"/>
</dbReference>
<dbReference type="ChiTaRS" id="SLC35B2">
    <property type="organism name" value="human"/>
</dbReference>
<dbReference type="GeneWiki" id="SLC35B2"/>
<dbReference type="GenomeRNAi" id="347734"/>
<dbReference type="Pharos" id="Q8TB61">
    <property type="development level" value="Tbio"/>
</dbReference>
<dbReference type="PRO" id="PR:Q8TB61"/>
<dbReference type="Proteomes" id="UP000005640">
    <property type="component" value="Chromosome 6"/>
</dbReference>
<dbReference type="RNAct" id="Q8TB61">
    <property type="molecule type" value="protein"/>
</dbReference>
<dbReference type="Bgee" id="ENSG00000157593">
    <property type="expression patterns" value="Expressed in stromal cell of endometrium and 97 other cell types or tissues"/>
</dbReference>
<dbReference type="ExpressionAtlas" id="Q8TB61">
    <property type="expression patterns" value="baseline and differential"/>
</dbReference>
<dbReference type="GO" id="GO:0005789">
    <property type="term" value="C:endoplasmic reticulum membrane"/>
    <property type="evidence" value="ECO:0000318"/>
    <property type="project" value="GO_Central"/>
</dbReference>
<dbReference type="GO" id="GO:0005794">
    <property type="term" value="C:Golgi apparatus"/>
    <property type="evidence" value="ECO:0000314"/>
    <property type="project" value="UniProtKB"/>
</dbReference>
<dbReference type="GO" id="GO:0000139">
    <property type="term" value="C:Golgi membrane"/>
    <property type="evidence" value="ECO:0000314"/>
    <property type="project" value="UniProtKB"/>
</dbReference>
<dbReference type="GO" id="GO:0016020">
    <property type="term" value="C:membrane"/>
    <property type="evidence" value="ECO:0000314"/>
    <property type="project" value="UniProtKB"/>
</dbReference>
<dbReference type="GO" id="GO:0005802">
    <property type="term" value="C:trans-Golgi network"/>
    <property type="evidence" value="ECO:0007669"/>
    <property type="project" value="Ensembl"/>
</dbReference>
<dbReference type="GO" id="GO:0046964">
    <property type="term" value="F:3'-phosphoadenosine 5'-phosphosulfate transmembrane transporter activity"/>
    <property type="evidence" value="ECO:0000314"/>
    <property type="project" value="UniProtKB"/>
</dbReference>
<dbReference type="GO" id="GO:0015297">
    <property type="term" value="F:antiporter activity"/>
    <property type="evidence" value="ECO:0007669"/>
    <property type="project" value="UniProtKB-KW"/>
</dbReference>
<dbReference type="GO" id="GO:0046963">
    <property type="term" value="P:3'-phosphoadenosine 5'-phosphosulfate transport"/>
    <property type="evidence" value="ECO:0000314"/>
    <property type="project" value="UniProtKB"/>
</dbReference>
<dbReference type="GO" id="GO:1902558">
    <property type="term" value="P:5'-adenylyl sulfate transmembrane transport"/>
    <property type="evidence" value="ECO:0000304"/>
    <property type="project" value="Reactome"/>
</dbReference>
<dbReference type="GO" id="GO:0050650">
    <property type="term" value="P:chondroitin sulfate proteoglycan biosynthetic process"/>
    <property type="evidence" value="ECO:0000315"/>
    <property type="project" value="UniProtKB"/>
</dbReference>
<dbReference type="GO" id="GO:0043123">
    <property type="term" value="P:positive regulation of canonical NF-kappaB signal transduction"/>
    <property type="evidence" value="ECO:0007001"/>
    <property type="project" value="UniProtKB"/>
</dbReference>
<dbReference type="GO" id="GO:0055085">
    <property type="term" value="P:transmembrane transport"/>
    <property type="evidence" value="ECO:0000318"/>
    <property type="project" value="GO_Central"/>
</dbReference>
<dbReference type="InterPro" id="IPR013657">
    <property type="entry name" value="SCL35B1-4/HUT1"/>
</dbReference>
<dbReference type="PANTHER" id="PTHR10778:SF13">
    <property type="entry name" value="ADENOSINE 3'-PHOSPHO 5'-PHOSPHOSULFATE TRANSPORTER 1"/>
    <property type="match status" value="1"/>
</dbReference>
<dbReference type="PANTHER" id="PTHR10778">
    <property type="entry name" value="SOLUTE CARRIER FAMILY 35 MEMBER B"/>
    <property type="match status" value="1"/>
</dbReference>
<dbReference type="Pfam" id="PF08449">
    <property type="entry name" value="UAA"/>
    <property type="match status" value="1"/>
</dbReference>
<dbReference type="SUPFAM" id="SSF103481">
    <property type="entry name" value="Multidrug resistance efflux transporter EmrE"/>
    <property type="match status" value="1"/>
</dbReference>
<proteinExistence type="evidence at protein level"/>
<comment type="function">
    <text evidence="2">Probably functions as a 3'-phosphoadenylyl sulfate:adenosine 3',5'-bisphosphate antiporter at the Golgi membranes. Mediates the transport from the cytosol into the lumen of the Golgi of 3'-phosphoadenylyl sulfate/adenosine 3'-phospho 5'-phosphosulfate (PAPS), a universal sulfuryl donor for sulfation events that take place in that compartment.</text>
</comment>
<comment type="catalytic activity">
    <reaction evidence="10">
        <text>3'-phosphoadenylyl sulfate(in) + adenosine 3',5'-bisphosphate(out) = 3'-phosphoadenylyl sulfate(out) + adenosine 3',5'-bisphosphate(in)</text>
        <dbReference type="Rhea" id="RHEA:76063"/>
        <dbReference type="ChEBI" id="CHEBI:58339"/>
        <dbReference type="ChEBI" id="CHEBI:58343"/>
    </reaction>
</comment>
<comment type="biophysicochemical properties">
    <kinetics>
        <KM evidence="2">0.8 uM for 3'-phosphoadenylyl sulfate</KM>
    </kinetics>
</comment>
<comment type="interaction">
    <interactant intactId="EBI-1054782">
        <id>Q8TB61</id>
    </interactant>
    <interactant intactId="EBI-13059134">
        <id>Q13520</id>
        <label>AQP6</label>
    </interactant>
    <organismsDiffer>false</organismsDiffer>
    <experiments>3</experiments>
</comment>
<comment type="interaction">
    <interactant intactId="EBI-1054782">
        <id>Q8TB61</id>
    </interactant>
    <interactant intactId="EBI-12808270">
        <id>P07307-3</id>
        <label>ASGR2</label>
    </interactant>
    <organismsDiffer>false</organismsDiffer>
    <experiments>3</experiments>
</comment>
<comment type="interaction">
    <interactant intactId="EBI-1054782">
        <id>Q8TB61</id>
    </interactant>
    <interactant intactId="EBI-2836595">
        <id>Q07108</id>
        <label>CD69</label>
    </interactant>
    <organismsDiffer>false</organismsDiffer>
    <experiments>3</experiments>
</comment>
<comment type="interaction">
    <interactant intactId="EBI-1054782">
        <id>Q8TB61</id>
    </interactant>
    <interactant intactId="EBI-12867518">
        <id>Q96FX9</id>
        <label>CLDN15</label>
    </interactant>
    <organismsDiffer>false</organismsDiffer>
    <experiments>3</experiments>
</comment>
<comment type="interaction">
    <interactant intactId="EBI-1054782">
        <id>Q8TB61</id>
    </interactant>
    <interactant intactId="EBI-6942903">
        <id>Q96BA8</id>
        <label>CREB3L1</label>
    </interactant>
    <organismsDiffer>false</organismsDiffer>
    <experiments>5</experiments>
</comment>
<comment type="interaction">
    <interactant intactId="EBI-1054782">
        <id>Q8TB61</id>
    </interactant>
    <interactant intactId="EBI-1046040">
        <id>P00387</id>
        <label>CYB5R3</label>
    </interactant>
    <organismsDiffer>false</organismsDiffer>
    <experiments>3</experiments>
</comment>
<comment type="interaction">
    <interactant intactId="EBI-1054782">
        <id>Q8TB61</id>
    </interactant>
    <interactant intactId="EBI-781551">
        <id>Q9Y282</id>
        <label>ERGIC3</label>
    </interactant>
    <organismsDiffer>false</organismsDiffer>
    <experiments>3</experiments>
</comment>
<comment type="interaction">
    <interactant intactId="EBI-1054782">
        <id>Q8TB61</id>
    </interactant>
    <interactant intactId="EBI-712073">
        <id>Q8NBJ4</id>
        <label>GOLM1</label>
    </interactant>
    <organismsDiffer>false</organismsDiffer>
    <experiments>3</experiments>
</comment>
<comment type="interaction">
    <interactant intactId="EBI-1054782">
        <id>Q8TB61</id>
    </interactant>
    <interactant intactId="EBI-12055631">
        <id>Q96K19-5</id>
        <label>RNF170</label>
    </interactant>
    <organismsDiffer>false</organismsDiffer>
    <experiments>3</experiments>
</comment>
<comment type="interaction">
    <interactant intactId="EBI-1054782">
        <id>Q8TB61</id>
    </interactant>
    <interactant intactId="EBI-18037857">
        <id>Q3SXP7</id>
        <label>SHISAL1</label>
    </interactant>
    <organismsDiffer>false</organismsDiffer>
    <experiments>3</experiments>
</comment>
<comment type="interaction">
    <interactant intactId="EBI-1054782">
        <id>Q8TB61</id>
    </interactant>
    <interactant intactId="EBI-19027521">
        <id>Q8N6K0</id>
        <label>TEX29</label>
    </interactant>
    <organismsDiffer>false</organismsDiffer>
    <experiments>3</experiments>
</comment>
<comment type="interaction">
    <interactant intactId="EBI-1054782">
        <id>Q8TB61</id>
    </interactant>
    <interactant intactId="EBI-10982110">
        <id>Q96Q45-2</id>
        <label>TMEM237</label>
    </interactant>
    <organismsDiffer>false</organismsDiffer>
    <experiments>3</experiments>
</comment>
<comment type="interaction">
    <interactant intactId="EBI-1054782">
        <id>Q8TB61</id>
    </interactant>
    <interactant intactId="EBI-10314986">
        <id>Q9NWD8</id>
        <label>TMEM248</label>
    </interactant>
    <organismsDiffer>false</organismsDiffer>
    <experiments>3</experiments>
</comment>
<comment type="subcellular location">
    <subcellularLocation>
        <location evidence="2 4">Golgi apparatus membrane</location>
        <topology evidence="1">Multi-pass membrane protein</topology>
    </subcellularLocation>
</comment>
<comment type="alternative products">
    <event type="alternative splicing"/>
    <isoform>
        <id>Q8TB61-1</id>
        <name>1</name>
        <sequence type="displayed"/>
    </isoform>
    <isoform>
        <id>Q8TB61-2</id>
        <name>2</name>
        <sequence type="described" ref="VSP_014084"/>
    </isoform>
    <isoform>
        <id>Q8TB61-3</id>
        <name>3</name>
        <sequence type="described" ref="VSP_026949"/>
    </isoform>
    <isoform>
        <id>Q8TB61-4</id>
        <name>4</name>
        <sequence type="described" ref="VSP_054696 VSP_054697"/>
    </isoform>
    <isoform>
        <id>Q8TB61-5</id>
        <name>5</name>
        <sequence type="described" ref="VSP_057436"/>
    </isoform>
</comment>
<comment type="tissue specificity">
    <text evidence="2 4">Highly expressed in the placenta, pancreas, mammary gland and skeletal muscle. Weakly or not expressed in colon, heart and prostate (PubMed:12716889). Expressed in the brain, predominantly in frontal lobe gray matter, subcortical frontal white matter and cerebellum (PubMed:35325049).</text>
</comment>
<comment type="disease" evidence="4">
    <disease id="DI-06624">
        <name>Leukodystrophy, hypomyelinating, 26, with chondrodysplasia</name>
        <acronym>HLD26</acronym>
        <description>A form of hypomyelinating leukodystrophy, a group of heterogeneous disorders characterized by persistent deficit of myelin observed on brain imaging. HLD26 is an autosomal recessive form characterized by severe psychomotor delay, limited or absent speech, abnormal development of brain white matter, corpus callosum hypoplasia, and cerebral atrophy. Other features include pre- and postnatal growth retardation, chondrodysplasia, and early-onset scoliosis.</description>
        <dbReference type="MIM" id="620269"/>
    </disease>
    <text>The disease may be caused by variants affecting the gene represented in this entry.</text>
</comment>
<comment type="similarity">
    <text evidence="9">Belongs to the nucleotide-sugar transporter family. SLC35B subfamily.</text>
</comment>
<keyword id="KW-0025">Alternative splicing</keyword>
<keyword id="KW-0050">Antiport</keyword>
<keyword id="KW-0333">Golgi apparatus</keyword>
<keyword id="KW-1026">Leukodystrophy</keyword>
<keyword id="KW-0472">Membrane</keyword>
<keyword id="KW-0597">Phosphoprotein</keyword>
<keyword id="KW-1267">Proteomics identification</keyword>
<keyword id="KW-1185">Reference proteome</keyword>
<keyword id="KW-0812">Transmembrane</keyword>
<keyword id="KW-1133">Transmembrane helix</keyword>
<keyword id="KW-0813">Transport</keyword>
<protein>
    <recommendedName>
        <fullName evidence="10">Adenosine 3'-phospho 5'-phosphosulfate transporter 1</fullName>
    </recommendedName>
    <alternativeName>
        <fullName evidence="5">PAPS transporter 1</fullName>
    </alternativeName>
    <alternativeName>
        <fullName>Putative MAPK-activating protein PM15</fullName>
    </alternativeName>
    <alternativeName>
        <fullName>Putative NF-kappa-B-activating protein 48</fullName>
    </alternativeName>
    <alternativeName>
        <fullName evidence="12">Solute carrier family 35 member B2</fullName>
    </alternativeName>
</protein>
<sequence length="432" mass="47515">MDARWWAVVVLAAFPSLGAGGETPEAPPESWTQLWFFRFVVNAAGYASFMVPGYLLVQYFRRKNYLETGRGLCFPLVKACVFGNEPKASDEVPLAPRTEAAETTPMWQALKLLFCATGLQVSYLTWGVLQERVMTRSYGATATSPGERFTDSQFLVLMNRVLALIVAGLSCVLCKQPRHGAPMYRYSFASLSNVLSSWCQYEALKFVSFPTQVLAKASKVIPVMLMGKLVSRRSYEHWEYLTATLISIGVSMFLLSSGPEPRSSPATTLSGLILLAGYIAFDSFTSNWQDALFAYKMSSVQMMFGVNFFSCLFTVGSLLEQGALLEGTRFMGRHSEFAAHALLLSICSACGQLFIFYTIGQFGAAVFTIIMTLRQAFAILLSCLLYGHTVTVVGGLGVAVVFAALLLRVYARGRLKQRGKKAVPVESPVQKV</sequence>
<reference key="1">
    <citation type="journal article" date="2003" name="J. Biol. Chem.">
        <title>Molecular cloning and identification of 3'-phosphoadenosine 5'-phosphosulfate transporter.</title>
        <authorList>
            <person name="Kamiyama S."/>
            <person name="Suda T."/>
            <person name="Ueda R."/>
            <person name="Suzuki M."/>
            <person name="Okubo R."/>
            <person name="Kikuchi N."/>
            <person name="Chiba Y."/>
            <person name="Goto S."/>
            <person name="Toyoda H."/>
            <person name="Saigo K."/>
            <person name="Watanabe M."/>
            <person name="Narimatsu H."/>
            <person name="Jigami Y."/>
            <person name="Nishihara S."/>
        </authorList>
    </citation>
    <scope>NUCLEOTIDE SEQUENCE [MRNA] (ISOFORM 1)</scope>
    <scope>FUNCTION</scope>
    <scope>TRANSPORTER ACTIVITY</scope>
    <scope>BIOPHYSICOCHEMICAL PROPERTIES</scope>
    <scope>SUBCELLULAR LOCATION</scope>
    <scope>TISSUE SPECIFICITY</scope>
    <source>
        <tissue>Colon</tissue>
    </source>
</reference>
<reference key="2">
    <citation type="submission" date="2003-11" db="EMBL/GenBank/DDBJ databases">
        <title>Identification of a splicing variant of solute carrier family 35, member B2 (SLC35B2).</title>
        <authorList>
            <person name="Xu J."/>
            <person name="Xie Y."/>
            <person name="Mao Y."/>
        </authorList>
    </citation>
    <scope>NUCLEOTIDE SEQUENCE [MRNA] (ISOFORM 3)</scope>
</reference>
<reference key="3">
    <citation type="journal article" date="2003" name="Oncogene">
        <title>Large-scale identification and characterization of human genes that activate NF-kappaB and MAPK signaling pathways.</title>
        <authorList>
            <person name="Matsuda A."/>
            <person name="Suzuki Y."/>
            <person name="Honda G."/>
            <person name="Muramatsu S."/>
            <person name="Matsuzaki O."/>
            <person name="Nagano Y."/>
            <person name="Doi T."/>
            <person name="Shimotohno K."/>
            <person name="Harada T."/>
            <person name="Nishida E."/>
            <person name="Hayashi H."/>
            <person name="Sugano S."/>
        </authorList>
    </citation>
    <scope>NUCLEOTIDE SEQUENCE [LARGE SCALE MRNA] (ISOFORM 2)</scope>
    <source>
        <tissue>Lung fibroblast</tissue>
    </source>
</reference>
<reference key="4">
    <citation type="journal article" date="2004" name="Nat. Genet.">
        <title>Complete sequencing and characterization of 21,243 full-length human cDNAs.</title>
        <authorList>
            <person name="Ota T."/>
            <person name="Suzuki Y."/>
            <person name="Nishikawa T."/>
            <person name="Otsuki T."/>
            <person name="Sugiyama T."/>
            <person name="Irie R."/>
            <person name="Wakamatsu A."/>
            <person name="Hayashi K."/>
            <person name="Sato H."/>
            <person name="Nagai K."/>
            <person name="Kimura K."/>
            <person name="Makita H."/>
            <person name="Sekine M."/>
            <person name="Obayashi M."/>
            <person name="Nishi T."/>
            <person name="Shibahara T."/>
            <person name="Tanaka T."/>
            <person name="Ishii S."/>
            <person name="Yamamoto J."/>
            <person name="Saito K."/>
            <person name="Kawai Y."/>
            <person name="Isono Y."/>
            <person name="Nakamura Y."/>
            <person name="Nagahari K."/>
            <person name="Murakami K."/>
            <person name="Yasuda T."/>
            <person name="Iwayanagi T."/>
            <person name="Wagatsuma M."/>
            <person name="Shiratori A."/>
            <person name="Sudo H."/>
            <person name="Hosoiri T."/>
            <person name="Kaku Y."/>
            <person name="Kodaira H."/>
            <person name="Kondo H."/>
            <person name="Sugawara M."/>
            <person name="Takahashi M."/>
            <person name="Kanda K."/>
            <person name="Yokoi T."/>
            <person name="Furuya T."/>
            <person name="Kikkawa E."/>
            <person name="Omura Y."/>
            <person name="Abe K."/>
            <person name="Kamihara K."/>
            <person name="Katsuta N."/>
            <person name="Sato K."/>
            <person name="Tanikawa M."/>
            <person name="Yamazaki M."/>
            <person name="Ninomiya K."/>
            <person name="Ishibashi T."/>
            <person name="Yamashita H."/>
            <person name="Murakawa K."/>
            <person name="Fujimori K."/>
            <person name="Tanai H."/>
            <person name="Kimata M."/>
            <person name="Watanabe M."/>
            <person name="Hiraoka S."/>
            <person name="Chiba Y."/>
            <person name="Ishida S."/>
            <person name="Ono Y."/>
            <person name="Takiguchi S."/>
            <person name="Watanabe S."/>
            <person name="Yosida M."/>
            <person name="Hotuta T."/>
            <person name="Kusano J."/>
            <person name="Kanehori K."/>
            <person name="Takahashi-Fujii A."/>
            <person name="Hara H."/>
            <person name="Tanase T.-O."/>
            <person name="Nomura Y."/>
            <person name="Togiya S."/>
            <person name="Komai F."/>
            <person name="Hara R."/>
            <person name="Takeuchi K."/>
            <person name="Arita M."/>
            <person name="Imose N."/>
            <person name="Musashino K."/>
            <person name="Yuuki H."/>
            <person name="Oshima A."/>
            <person name="Sasaki N."/>
            <person name="Aotsuka S."/>
            <person name="Yoshikawa Y."/>
            <person name="Matsunawa H."/>
            <person name="Ichihara T."/>
            <person name="Shiohata N."/>
            <person name="Sano S."/>
            <person name="Moriya S."/>
            <person name="Momiyama H."/>
            <person name="Satoh N."/>
            <person name="Takami S."/>
            <person name="Terashima Y."/>
            <person name="Suzuki O."/>
            <person name="Nakagawa S."/>
            <person name="Senoh A."/>
            <person name="Mizoguchi H."/>
            <person name="Goto Y."/>
            <person name="Shimizu F."/>
            <person name="Wakebe H."/>
            <person name="Hishigaki H."/>
            <person name="Watanabe T."/>
            <person name="Sugiyama A."/>
            <person name="Takemoto M."/>
            <person name="Kawakami B."/>
            <person name="Yamazaki M."/>
            <person name="Watanabe K."/>
            <person name="Kumagai A."/>
            <person name="Itakura S."/>
            <person name="Fukuzumi Y."/>
            <person name="Fujimori Y."/>
            <person name="Komiyama M."/>
            <person name="Tashiro H."/>
            <person name="Tanigami A."/>
            <person name="Fujiwara T."/>
            <person name="Ono T."/>
            <person name="Yamada K."/>
            <person name="Fujii Y."/>
            <person name="Ozaki K."/>
            <person name="Hirao M."/>
            <person name="Ohmori Y."/>
            <person name="Kawabata A."/>
            <person name="Hikiji T."/>
            <person name="Kobatake N."/>
            <person name="Inagaki H."/>
            <person name="Ikema Y."/>
            <person name="Okamoto S."/>
            <person name="Okitani R."/>
            <person name="Kawakami T."/>
            <person name="Noguchi S."/>
            <person name="Itoh T."/>
            <person name="Shigeta K."/>
            <person name="Senba T."/>
            <person name="Matsumura K."/>
            <person name="Nakajima Y."/>
            <person name="Mizuno T."/>
            <person name="Morinaga M."/>
            <person name="Sasaki M."/>
            <person name="Togashi T."/>
            <person name="Oyama M."/>
            <person name="Hata H."/>
            <person name="Watanabe M."/>
            <person name="Komatsu T."/>
            <person name="Mizushima-Sugano J."/>
            <person name="Satoh T."/>
            <person name="Shirai Y."/>
            <person name="Takahashi Y."/>
            <person name="Nakagawa K."/>
            <person name="Okumura K."/>
            <person name="Nagase T."/>
            <person name="Nomura N."/>
            <person name="Kikuchi H."/>
            <person name="Masuho Y."/>
            <person name="Yamashita R."/>
            <person name="Nakai K."/>
            <person name="Yada T."/>
            <person name="Nakamura Y."/>
            <person name="Ohara O."/>
            <person name="Isogai T."/>
            <person name="Sugano S."/>
        </authorList>
    </citation>
    <scope>NUCLEOTIDE SEQUENCE [LARGE SCALE MRNA] (ISOFORMS 4 AND 5)</scope>
    <scope>VARIANT VAL-342</scope>
</reference>
<reference key="5">
    <citation type="journal article" date="2005" name="DNA Res.">
        <title>Signal sequence and keyword trap in silico for selection of full-length human cDNAs encoding secretion or membrane proteins from oligo-capped cDNA libraries.</title>
        <authorList>
            <person name="Otsuki T."/>
            <person name="Ota T."/>
            <person name="Nishikawa T."/>
            <person name="Hayashi K."/>
            <person name="Suzuki Y."/>
            <person name="Yamamoto J."/>
            <person name="Wakamatsu A."/>
            <person name="Kimura K."/>
            <person name="Sakamoto K."/>
            <person name="Hatano N."/>
            <person name="Kawai Y."/>
            <person name="Ishii S."/>
            <person name="Saito K."/>
            <person name="Kojima S."/>
            <person name="Sugiyama T."/>
            <person name="Ono T."/>
            <person name="Okano K."/>
            <person name="Yoshikawa Y."/>
            <person name="Aotsuka S."/>
            <person name="Sasaki N."/>
            <person name="Hattori A."/>
            <person name="Okumura K."/>
            <person name="Nagai K."/>
            <person name="Sugano S."/>
            <person name="Isogai T."/>
        </authorList>
    </citation>
    <scope>NUCLEOTIDE SEQUENCE [LARGE SCALE MRNA] (ISOFORM 1)</scope>
    <source>
        <tissue>Placenta</tissue>
    </source>
</reference>
<reference key="6">
    <citation type="journal article" date="2003" name="Nature">
        <title>The DNA sequence and analysis of human chromosome 6.</title>
        <authorList>
            <person name="Mungall A.J."/>
            <person name="Palmer S.A."/>
            <person name="Sims S.K."/>
            <person name="Edwards C.A."/>
            <person name="Ashurst J.L."/>
            <person name="Wilming L."/>
            <person name="Jones M.C."/>
            <person name="Horton R."/>
            <person name="Hunt S.E."/>
            <person name="Scott C.E."/>
            <person name="Gilbert J.G.R."/>
            <person name="Clamp M.E."/>
            <person name="Bethel G."/>
            <person name="Milne S."/>
            <person name="Ainscough R."/>
            <person name="Almeida J.P."/>
            <person name="Ambrose K.D."/>
            <person name="Andrews T.D."/>
            <person name="Ashwell R.I.S."/>
            <person name="Babbage A.K."/>
            <person name="Bagguley C.L."/>
            <person name="Bailey J."/>
            <person name="Banerjee R."/>
            <person name="Barker D.J."/>
            <person name="Barlow K.F."/>
            <person name="Bates K."/>
            <person name="Beare D.M."/>
            <person name="Beasley H."/>
            <person name="Beasley O."/>
            <person name="Bird C.P."/>
            <person name="Blakey S.E."/>
            <person name="Bray-Allen S."/>
            <person name="Brook J."/>
            <person name="Brown A.J."/>
            <person name="Brown J.Y."/>
            <person name="Burford D.C."/>
            <person name="Burrill W."/>
            <person name="Burton J."/>
            <person name="Carder C."/>
            <person name="Carter N.P."/>
            <person name="Chapman J.C."/>
            <person name="Clark S.Y."/>
            <person name="Clark G."/>
            <person name="Clee C.M."/>
            <person name="Clegg S."/>
            <person name="Cobley V."/>
            <person name="Collier R.E."/>
            <person name="Collins J.E."/>
            <person name="Colman L.K."/>
            <person name="Corby N.R."/>
            <person name="Coville G.J."/>
            <person name="Culley K.M."/>
            <person name="Dhami P."/>
            <person name="Davies J."/>
            <person name="Dunn M."/>
            <person name="Earthrowl M.E."/>
            <person name="Ellington A.E."/>
            <person name="Evans K.A."/>
            <person name="Faulkner L."/>
            <person name="Francis M.D."/>
            <person name="Frankish A."/>
            <person name="Frankland J."/>
            <person name="French L."/>
            <person name="Garner P."/>
            <person name="Garnett J."/>
            <person name="Ghori M.J."/>
            <person name="Gilby L.M."/>
            <person name="Gillson C.J."/>
            <person name="Glithero R.J."/>
            <person name="Grafham D.V."/>
            <person name="Grant M."/>
            <person name="Gribble S."/>
            <person name="Griffiths C."/>
            <person name="Griffiths M.N.D."/>
            <person name="Hall R."/>
            <person name="Halls K.S."/>
            <person name="Hammond S."/>
            <person name="Harley J.L."/>
            <person name="Hart E.A."/>
            <person name="Heath P.D."/>
            <person name="Heathcott R."/>
            <person name="Holmes S.J."/>
            <person name="Howden P.J."/>
            <person name="Howe K.L."/>
            <person name="Howell G.R."/>
            <person name="Huckle E."/>
            <person name="Humphray S.J."/>
            <person name="Humphries M.D."/>
            <person name="Hunt A.R."/>
            <person name="Johnson C.M."/>
            <person name="Joy A.A."/>
            <person name="Kay M."/>
            <person name="Keenan S.J."/>
            <person name="Kimberley A.M."/>
            <person name="King A."/>
            <person name="Laird G.K."/>
            <person name="Langford C."/>
            <person name="Lawlor S."/>
            <person name="Leongamornlert D.A."/>
            <person name="Leversha M."/>
            <person name="Lloyd C.R."/>
            <person name="Lloyd D.M."/>
            <person name="Loveland J.E."/>
            <person name="Lovell J."/>
            <person name="Martin S."/>
            <person name="Mashreghi-Mohammadi M."/>
            <person name="Maslen G.L."/>
            <person name="Matthews L."/>
            <person name="McCann O.T."/>
            <person name="McLaren S.J."/>
            <person name="McLay K."/>
            <person name="McMurray A."/>
            <person name="Moore M.J.F."/>
            <person name="Mullikin J.C."/>
            <person name="Niblett D."/>
            <person name="Nickerson T."/>
            <person name="Novik K.L."/>
            <person name="Oliver K."/>
            <person name="Overton-Larty E.K."/>
            <person name="Parker A."/>
            <person name="Patel R."/>
            <person name="Pearce A.V."/>
            <person name="Peck A.I."/>
            <person name="Phillimore B.J.C.T."/>
            <person name="Phillips S."/>
            <person name="Plumb R.W."/>
            <person name="Porter K.M."/>
            <person name="Ramsey Y."/>
            <person name="Ranby S.A."/>
            <person name="Rice C.M."/>
            <person name="Ross M.T."/>
            <person name="Searle S.M."/>
            <person name="Sehra H.K."/>
            <person name="Sheridan E."/>
            <person name="Skuce C.D."/>
            <person name="Smith S."/>
            <person name="Smith M."/>
            <person name="Spraggon L."/>
            <person name="Squares S.L."/>
            <person name="Steward C.A."/>
            <person name="Sycamore N."/>
            <person name="Tamlyn-Hall G."/>
            <person name="Tester J."/>
            <person name="Theaker A.J."/>
            <person name="Thomas D.W."/>
            <person name="Thorpe A."/>
            <person name="Tracey A."/>
            <person name="Tromans A."/>
            <person name="Tubby B."/>
            <person name="Wall M."/>
            <person name="Wallis J.M."/>
            <person name="West A.P."/>
            <person name="White S.S."/>
            <person name="Whitehead S.L."/>
            <person name="Whittaker H."/>
            <person name="Wild A."/>
            <person name="Willey D.J."/>
            <person name="Wilmer T.E."/>
            <person name="Wood J.M."/>
            <person name="Wray P.W."/>
            <person name="Wyatt J.C."/>
            <person name="Young L."/>
            <person name="Younger R.M."/>
            <person name="Bentley D.R."/>
            <person name="Coulson A."/>
            <person name="Durbin R.M."/>
            <person name="Hubbard T."/>
            <person name="Sulston J.E."/>
            <person name="Dunham I."/>
            <person name="Rogers J."/>
            <person name="Beck S."/>
        </authorList>
    </citation>
    <scope>NUCLEOTIDE SEQUENCE [LARGE SCALE GENOMIC DNA]</scope>
</reference>
<reference key="7">
    <citation type="journal article" date="2004" name="Genome Res.">
        <title>The status, quality, and expansion of the NIH full-length cDNA project: the Mammalian Gene Collection (MGC).</title>
        <authorList>
            <consortium name="The MGC Project Team"/>
        </authorList>
    </citation>
    <scope>NUCLEOTIDE SEQUENCE [LARGE SCALE MRNA] (ISOFORM 1)</scope>
    <source>
        <tissue>Lung carcinoma</tissue>
        <tissue>Neuroblastoma</tissue>
    </source>
</reference>
<reference key="8">
    <citation type="submission" date="2005-04" db="EMBL/GenBank/DDBJ databases">
        <authorList>
            <person name="Suzuki Y."/>
            <person name="Sugano S."/>
            <person name="Totoki Y."/>
            <person name="Toyoda A."/>
            <person name="Takeda T."/>
            <person name="Sakaki Y."/>
            <person name="Tanaka A."/>
            <person name="Yokoyama S."/>
        </authorList>
    </citation>
    <scope>NUCLEOTIDE SEQUENCE [LARGE SCALE MRNA] OF 64-432 (ISOFORMS 1/3)</scope>
    <source>
        <tissue>Thyroid</tissue>
    </source>
</reference>
<reference key="9">
    <citation type="journal article" date="2008" name="Mol. Cell">
        <title>Kinase-selective enrichment enables quantitative phosphoproteomics of the kinome across the cell cycle.</title>
        <authorList>
            <person name="Daub H."/>
            <person name="Olsen J.V."/>
            <person name="Bairlein M."/>
            <person name="Gnad F."/>
            <person name="Oppermann F.S."/>
            <person name="Korner R."/>
            <person name="Greff Z."/>
            <person name="Keri G."/>
            <person name="Stemmann O."/>
            <person name="Mann M."/>
        </authorList>
    </citation>
    <scope>PHOSPHORYLATION [LARGE SCALE ANALYSIS] AT SER-427</scope>
    <scope>IDENTIFICATION BY MASS SPECTROMETRY [LARGE SCALE ANALYSIS]</scope>
    <source>
        <tissue>Cervix carcinoma</tissue>
    </source>
</reference>
<reference key="10">
    <citation type="journal article" date="2008" name="Proc. Natl. Acad. Sci. U.S.A.">
        <title>A quantitative atlas of mitotic phosphorylation.</title>
        <authorList>
            <person name="Dephoure N."/>
            <person name="Zhou C."/>
            <person name="Villen J."/>
            <person name="Beausoleil S.A."/>
            <person name="Bakalarski C.E."/>
            <person name="Elledge S.J."/>
            <person name="Gygi S.P."/>
        </authorList>
    </citation>
    <scope>IDENTIFICATION BY MASS SPECTROMETRY [LARGE SCALE ANALYSIS]</scope>
    <source>
        <tissue>Cervix carcinoma</tissue>
    </source>
</reference>
<reference key="11">
    <citation type="journal article" date="2009" name="Anal. Chem.">
        <title>Lys-N and trypsin cover complementary parts of the phosphoproteome in a refined SCX-based approach.</title>
        <authorList>
            <person name="Gauci S."/>
            <person name="Helbig A.O."/>
            <person name="Slijper M."/>
            <person name="Krijgsveld J."/>
            <person name="Heck A.J."/>
            <person name="Mohammed S."/>
        </authorList>
    </citation>
    <scope>IDENTIFICATION BY MASS SPECTROMETRY [LARGE SCALE ANALYSIS]</scope>
</reference>
<reference key="12">
    <citation type="journal article" date="2010" name="Sci. Signal.">
        <title>Quantitative phosphoproteomics reveals widespread full phosphorylation site occupancy during mitosis.</title>
        <authorList>
            <person name="Olsen J.V."/>
            <person name="Vermeulen M."/>
            <person name="Santamaria A."/>
            <person name="Kumar C."/>
            <person name="Miller M.L."/>
            <person name="Jensen L.J."/>
            <person name="Gnad F."/>
            <person name="Cox J."/>
            <person name="Jensen T.S."/>
            <person name="Nigg E.A."/>
            <person name="Brunak S."/>
            <person name="Mann M."/>
        </authorList>
    </citation>
    <scope>PHOSPHORYLATION [LARGE SCALE ANALYSIS] AT SER-427</scope>
    <scope>IDENTIFICATION BY MASS SPECTROMETRY [LARGE SCALE ANALYSIS]</scope>
    <source>
        <tissue>Cervix carcinoma</tissue>
    </source>
</reference>
<reference key="13">
    <citation type="journal article" date="2011" name="BMC Syst. Biol.">
        <title>Initial characterization of the human central proteome.</title>
        <authorList>
            <person name="Burkard T.R."/>
            <person name="Planyavsky M."/>
            <person name="Kaupe I."/>
            <person name="Breitwieser F.P."/>
            <person name="Buerckstuemmer T."/>
            <person name="Bennett K.L."/>
            <person name="Superti-Furga G."/>
            <person name="Colinge J."/>
        </authorList>
    </citation>
    <scope>IDENTIFICATION BY MASS SPECTROMETRY [LARGE SCALE ANALYSIS]</scope>
</reference>
<reference key="14">
    <citation type="journal article" date="2013" name="J. Proteome Res.">
        <title>Toward a comprehensive characterization of a human cancer cell phosphoproteome.</title>
        <authorList>
            <person name="Zhou H."/>
            <person name="Di Palma S."/>
            <person name="Preisinger C."/>
            <person name="Peng M."/>
            <person name="Polat A.N."/>
            <person name="Heck A.J."/>
            <person name="Mohammed S."/>
        </authorList>
    </citation>
    <scope>PHOSPHORYLATION [LARGE SCALE ANALYSIS] AT SER-427</scope>
    <scope>IDENTIFICATION BY MASS SPECTROMETRY [LARGE SCALE ANALYSIS]</scope>
    <source>
        <tissue>Erythroleukemia</tissue>
    </source>
</reference>
<reference key="15">
    <citation type="journal article" date="2015" name="Proteomics">
        <title>N-terminome analysis of the human mitochondrial proteome.</title>
        <authorList>
            <person name="Vaca Jacome A.S."/>
            <person name="Rabilloud T."/>
            <person name="Schaeffer-Reiss C."/>
            <person name="Rompais M."/>
            <person name="Ayoub D."/>
            <person name="Lane L."/>
            <person name="Bairoch A."/>
            <person name="Van Dorsselaer A."/>
            <person name="Carapito C."/>
        </authorList>
    </citation>
    <scope>IDENTIFICATION BY MASS SPECTROMETRY [LARGE SCALE ANALYSIS]</scope>
</reference>
<reference key="16">
    <citation type="journal article" date="2022" name="Brain">
        <title>Biallelic variants in SLC35B2 cause a novel chondrodysplasia with hypomyelinating leukodystrophy.</title>
        <authorList>
            <person name="Guasto A."/>
            <person name="Dubail J."/>
            <person name="Aguilera-Albesa S."/>
            <person name="Paganini C."/>
            <person name="Vanhulle C."/>
            <person name="Haouari W."/>
            <person name="Gorria-Redondo N."/>
            <person name="Aznal-Sainz E."/>
            <person name="Boddaert N."/>
            <person name="Planas-Serra L."/>
            <person name="Schlueter A."/>
            <person name="Velez-Santamaria V."/>
            <person name="Verdura E."/>
            <person name="Bruneel A."/>
            <person name="Rossi A."/>
            <person name="Huber C."/>
            <person name="Pujol A."/>
            <person name="Cormier-Daire V."/>
        </authorList>
    </citation>
    <scope>INVOLVEMENT IN HLD26</scope>
    <scope>VARIANT HLD26 LEU-407 DEL</scope>
    <scope>CHARACTERIZATION OF VARIANT HLD26 LEU-407 DEL</scope>
    <scope>SUBCELLULAR LOCATION</scope>
    <scope>TISSUE SPECIFICITY</scope>
</reference>
<evidence type="ECO:0000255" key="1"/>
<evidence type="ECO:0000269" key="2">
    <source>
    </source>
</evidence>
<evidence type="ECO:0000269" key="3">
    <source>
    </source>
</evidence>
<evidence type="ECO:0000269" key="4">
    <source>
    </source>
</evidence>
<evidence type="ECO:0000303" key="5">
    <source>
    </source>
</evidence>
<evidence type="ECO:0000303" key="6">
    <source>
    </source>
</evidence>
<evidence type="ECO:0000303" key="7">
    <source>
    </source>
</evidence>
<evidence type="ECO:0000303" key="8">
    <source ref="2"/>
</evidence>
<evidence type="ECO:0000305" key="9"/>
<evidence type="ECO:0000305" key="10">
    <source>
    </source>
</evidence>
<evidence type="ECO:0000312" key="11">
    <source>
        <dbReference type="EMBL" id="BAC11631.1"/>
    </source>
</evidence>
<evidence type="ECO:0000312" key="12">
    <source>
        <dbReference type="HGNC" id="HGNC:16872"/>
    </source>
</evidence>
<evidence type="ECO:0007744" key="13">
    <source>
    </source>
</evidence>
<evidence type="ECO:0007744" key="14">
    <source>
    </source>
</evidence>
<evidence type="ECO:0007744" key="15">
    <source>
    </source>
</evidence>
<name>S35B2_HUMAN</name>